<sequence length="167" mass="19558">MYLYTSYGTYQFLNQIKLNHQERSLFQFSTNDSSIILEESEGKSILKHPSAYQVIDSTGEFNEHHFYSAIFVPTSEDHRQQLEKKLLLVDVPLRNFGGFKSYRLLKPTEGSTYKIYFGFANRTAYEDFKASDIFNENFSKDALSQYFGASGQHSSYFERYLYPIEDH</sequence>
<reference key="1">
    <citation type="journal article" date="2003" name="Mol. Microbiol.">
        <title>Genome-based analysis of virulence genes in a non-biofilm-forming Staphylococcus epidermidis strain (ATCC 12228).</title>
        <authorList>
            <person name="Zhang Y.-Q."/>
            <person name="Ren S.-X."/>
            <person name="Li H.-L."/>
            <person name="Wang Y.-X."/>
            <person name="Fu G."/>
            <person name="Yang J."/>
            <person name="Qin Z.-Q."/>
            <person name="Miao Y.-G."/>
            <person name="Wang W.-Y."/>
            <person name="Chen R.-S."/>
            <person name="Shen Y."/>
            <person name="Chen Z."/>
            <person name="Yuan Z.-H."/>
            <person name="Zhao G.-P."/>
            <person name="Qu D."/>
            <person name="Danchin A."/>
            <person name="Wen Y.-M."/>
        </authorList>
    </citation>
    <scope>NUCLEOTIDE SEQUENCE [LARGE SCALE GENOMIC DNA]</scope>
    <source>
        <strain>ATCC 12228 / FDA PCI 1200</strain>
    </source>
</reference>
<reference key="2">
    <citation type="journal article" date="2006" name="FEMS Microbiol. Lett.">
        <title>Comparative proteomic analysis between the invasive and commensal strains of Staphylococcus epidermidis.</title>
        <authorList>
            <person name="Yang X.-M."/>
            <person name="Li N."/>
            <person name="Chen J.-M."/>
            <person name="Ou Y.-Z."/>
            <person name="Jin H."/>
            <person name="Lu H.-J."/>
            <person name="Zhu Y.-L."/>
            <person name="Qin Z.-Q."/>
            <person name="Qu D."/>
            <person name="Yang P.-Y."/>
        </authorList>
    </citation>
    <scope>EXPRESSION</scope>
</reference>
<organism>
    <name type="scientific">Staphylococcus epidermidis (strain ATCC 12228 / FDA PCI 1200)</name>
    <dbReference type="NCBI Taxonomy" id="176280"/>
    <lineage>
        <taxon>Bacteria</taxon>
        <taxon>Bacillati</taxon>
        <taxon>Bacillota</taxon>
        <taxon>Bacilli</taxon>
        <taxon>Bacillales</taxon>
        <taxon>Staphylococcaceae</taxon>
        <taxon>Staphylococcus</taxon>
    </lineage>
</organism>
<gene>
    <name type="primary">traP</name>
    <name type="ordered locus">SE_1514</name>
</gene>
<evidence type="ECO:0000250" key="1"/>
<evidence type="ECO:0000305" key="2"/>
<comment type="subcellular location">
    <subcellularLocation>
        <location>Membrane</location>
    </subcellularLocation>
    <text evidence="1">Membrane-associated.</text>
</comment>
<comment type="PTM">
    <text evidence="1">RIP inhibits TRAP phosphorylation.</text>
</comment>
<comment type="miscellaneous">
    <text>Down-expressed in ATCC 12228 compared with ATCC 35984.</text>
</comment>
<comment type="similarity">
    <text evidence="2">Belongs to the TRAP family.</text>
</comment>
<protein>
    <recommendedName>
        <fullName>Signal transduction protein TRAP</fullName>
    </recommendedName>
    <alternativeName>
        <fullName>Target of RNAIII-activating protein</fullName>
    </alternativeName>
</protein>
<proteinExistence type="inferred from homology"/>
<name>TRAP_STAES</name>
<dbReference type="EMBL" id="AE015929">
    <property type="protein sequence ID" value="AAO05113.1"/>
    <property type="molecule type" value="Genomic_DNA"/>
</dbReference>
<dbReference type="RefSeq" id="NP_765069.1">
    <property type="nucleotide sequence ID" value="NC_004461.1"/>
</dbReference>
<dbReference type="RefSeq" id="WP_002485184.1">
    <property type="nucleotide sequence ID" value="NC_004461.1"/>
</dbReference>
<dbReference type="SMR" id="Q8CNR9"/>
<dbReference type="KEGG" id="sep:SE_1514"/>
<dbReference type="PATRIC" id="fig|176280.10.peg.1478"/>
<dbReference type="eggNOG" id="COG2329">
    <property type="taxonomic scope" value="Bacteria"/>
</dbReference>
<dbReference type="HOGENOM" id="CLU_116220_0_0_9"/>
<dbReference type="OrthoDB" id="2352283at2"/>
<dbReference type="Proteomes" id="UP000001411">
    <property type="component" value="Chromosome"/>
</dbReference>
<dbReference type="GO" id="GO:0016020">
    <property type="term" value="C:membrane"/>
    <property type="evidence" value="ECO:0007669"/>
    <property type="project" value="UniProtKB-SubCell"/>
</dbReference>
<dbReference type="Gene3D" id="3.30.70.100">
    <property type="match status" value="1"/>
</dbReference>
<dbReference type="InterPro" id="IPR007138">
    <property type="entry name" value="ABM_dom"/>
</dbReference>
<dbReference type="InterPro" id="IPR011008">
    <property type="entry name" value="Dimeric_a/b-barrel"/>
</dbReference>
<dbReference type="InterPro" id="IPR050404">
    <property type="entry name" value="Heme-degrading_MO"/>
</dbReference>
<dbReference type="PANTHER" id="PTHR34474">
    <property type="entry name" value="SIGNAL TRANSDUCTION PROTEIN TRAP"/>
    <property type="match status" value="1"/>
</dbReference>
<dbReference type="PANTHER" id="PTHR34474:SF2">
    <property type="entry name" value="SIGNAL TRANSDUCTION PROTEIN TRAP"/>
    <property type="match status" value="1"/>
</dbReference>
<dbReference type="SUPFAM" id="SSF54909">
    <property type="entry name" value="Dimeric alpha+beta barrel"/>
    <property type="match status" value="1"/>
</dbReference>
<dbReference type="PROSITE" id="PS51725">
    <property type="entry name" value="ABM"/>
    <property type="match status" value="1"/>
</dbReference>
<accession>Q8CNR9</accession>
<keyword id="KW-0472">Membrane</keyword>
<keyword id="KW-0597">Phosphoprotein</keyword>
<feature type="chain" id="PRO_0000289346" description="Signal transduction protein TRAP">
    <location>
        <begin position="1"/>
        <end position="167"/>
    </location>
</feature>
<feature type="domain" description="ABM">
    <location>
        <begin position="66"/>
        <end position="157"/>
    </location>
</feature>
<feature type="modified residue" description="Phosphohistidine" evidence="1">
    <location>
        <position position="65"/>
    </location>
</feature>
<feature type="modified residue" description="Phosphohistidine" evidence="1">
    <location>
        <position position="78"/>
    </location>
</feature>
<feature type="modified residue" description="Phosphohistidine" evidence="1">
    <location>
        <position position="153"/>
    </location>
</feature>